<feature type="chain" id="PRO_1000066306" description="Orotate phosphoribosyltransferase">
    <location>
        <begin position="1"/>
        <end position="210"/>
    </location>
</feature>
<feature type="binding site" evidence="1">
    <location>
        <position position="96"/>
    </location>
    <ligand>
        <name>5-phospho-alpha-D-ribose 1-diphosphate</name>
        <dbReference type="ChEBI" id="CHEBI:58017"/>
        <note>ligand shared between dimeric partners</note>
    </ligand>
</feature>
<feature type="binding site" evidence="1">
    <location>
        <position position="100"/>
    </location>
    <ligand>
        <name>5-phospho-alpha-D-ribose 1-diphosphate</name>
        <dbReference type="ChEBI" id="CHEBI:58017"/>
        <note>ligand shared between dimeric partners</note>
    </ligand>
</feature>
<feature type="binding site" evidence="1">
    <location>
        <position position="102"/>
    </location>
    <ligand>
        <name>5-phospho-alpha-D-ribose 1-diphosphate</name>
        <dbReference type="ChEBI" id="CHEBI:58017"/>
        <note>ligand shared between dimeric partners</note>
    </ligand>
</feature>
<feature type="binding site" description="in other chain" evidence="1">
    <location>
        <begin position="122"/>
        <end position="130"/>
    </location>
    <ligand>
        <name>5-phospho-alpha-D-ribose 1-diphosphate</name>
        <dbReference type="ChEBI" id="CHEBI:58017"/>
        <note>ligand shared between dimeric partners</note>
    </ligand>
</feature>
<feature type="binding site" evidence="1">
    <location>
        <position position="126"/>
    </location>
    <ligand>
        <name>orotate</name>
        <dbReference type="ChEBI" id="CHEBI:30839"/>
    </ligand>
</feature>
<keyword id="KW-0328">Glycosyltransferase</keyword>
<keyword id="KW-0460">Magnesium</keyword>
<keyword id="KW-0665">Pyrimidine biosynthesis</keyword>
<keyword id="KW-1185">Reference proteome</keyword>
<keyword id="KW-0808">Transferase</keyword>
<dbReference type="EC" id="2.4.2.10" evidence="1"/>
<dbReference type="EMBL" id="CP000410">
    <property type="protein sequence ID" value="ABJ53830.1"/>
    <property type="molecule type" value="Genomic_DNA"/>
</dbReference>
<dbReference type="RefSeq" id="WP_000170913.1">
    <property type="nucleotide sequence ID" value="NZ_JAMLJR010000001.1"/>
</dbReference>
<dbReference type="SMR" id="Q04LJ2"/>
<dbReference type="PaxDb" id="373153-SPD_0609"/>
<dbReference type="KEGG" id="spd:SPD_0609"/>
<dbReference type="eggNOG" id="COG0461">
    <property type="taxonomic scope" value="Bacteria"/>
</dbReference>
<dbReference type="HOGENOM" id="CLU_074878_1_1_9"/>
<dbReference type="BioCyc" id="SPNE373153:G1G6V-672-MONOMER"/>
<dbReference type="UniPathway" id="UPA00070">
    <property type="reaction ID" value="UER00119"/>
</dbReference>
<dbReference type="Proteomes" id="UP000001452">
    <property type="component" value="Chromosome"/>
</dbReference>
<dbReference type="GO" id="GO:0000287">
    <property type="term" value="F:magnesium ion binding"/>
    <property type="evidence" value="ECO:0007669"/>
    <property type="project" value="UniProtKB-UniRule"/>
</dbReference>
<dbReference type="GO" id="GO:0004588">
    <property type="term" value="F:orotate phosphoribosyltransferase activity"/>
    <property type="evidence" value="ECO:0007669"/>
    <property type="project" value="UniProtKB-UniRule"/>
</dbReference>
<dbReference type="GO" id="GO:0044205">
    <property type="term" value="P:'de novo' UMP biosynthetic process"/>
    <property type="evidence" value="ECO:0007669"/>
    <property type="project" value="UniProtKB-UniRule"/>
</dbReference>
<dbReference type="GO" id="GO:0019856">
    <property type="term" value="P:pyrimidine nucleobase biosynthetic process"/>
    <property type="evidence" value="ECO:0007669"/>
    <property type="project" value="TreeGrafter"/>
</dbReference>
<dbReference type="CDD" id="cd06223">
    <property type="entry name" value="PRTases_typeI"/>
    <property type="match status" value="1"/>
</dbReference>
<dbReference type="Gene3D" id="3.40.50.2020">
    <property type="match status" value="1"/>
</dbReference>
<dbReference type="HAMAP" id="MF_01208">
    <property type="entry name" value="PyrE"/>
    <property type="match status" value="1"/>
</dbReference>
<dbReference type="InterPro" id="IPR023031">
    <property type="entry name" value="OPRT"/>
</dbReference>
<dbReference type="InterPro" id="IPR004467">
    <property type="entry name" value="Or_phspho_trans_dom"/>
</dbReference>
<dbReference type="InterPro" id="IPR000836">
    <property type="entry name" value="PRibTrfase_dom"/>
</dbReference>
<dbReference type="InterPro" id="IPR029057">
    <property type="entry name" value="PRTase-like"/>
</dbReference>
<dbReference type="NCBIfam" id="TIGR00336">
    <property type="entry name" value="pyrE"/>
    <property type="match status" value="1"/>
</dbReference>
<dbReference type="PANTHER" id="PTHR19278">
    <property type="entry name" value="OROTATE PHOSPHORIBOSYLTRANSFERASE"/>
    <property type="match status" value="1"/>
</dbReference>
<dbReference type="PANTHER" id="PTHR19278:SF9">
    <property type="entry name" value="URIDINE 5'-MONOPHOSPHATE SYNTHASE"/>
    <property type="match status" value="1"/>
</dbReference>
<dbReference type="Pfam" id="PF00156">
    <property type="entry name" value="Pribosyltran"/>
    <property type="match status" value="1"/>
</dbReference>
<dbReference type="SUPFAM" id="SSF53271">
    <property type="entry name" value="PRTase-like"/>
    <property type="match status" value="1"/>
</dbReference>
<dbReference type="PROSITE" id="PS00103">
    <property type="entry name" value="PUR_PYR_PR_TRANSFER"/>
    <property type="match status" value="1"/>
</dbReference>
<comment type="function">
    <text evidence="1">Catalyzes the transfer of a ribosyl phosphate group from 5-phosphoribose 1-diphosphate to orotate, leading to the formation of orotidine monophosphate (OMP).</text>
</comment>
<comment type="catalytic activity">
    <reaction evidence="1">
        <text>orotidine 5'-phosphate + diphosphate = orotate + 5-phospho-alpha-D-ribose 1-diphosphate</text>
        <dbReference type="Rhea" id="RHEA:10380"/>
        <dbReference type="ChEBI" id="CHEBI:30839"/>
        <dbReference type="ChEBI" id="CHEBI:33019"/>
        <dbReference type="ChEBI" id="CHEBI:57538"/>
        <dbReference type="ChEBI" id="CHEBI:58017"/>
        <dbReference type="EC" id="2.4.2.10"/>
    </reaction>
</comment>
<comment type="cofactor">
    <cofactor evidence="1">
        <name>Mg(2+)</name>
        <dbReference type="ChEBI" id="CHEBI:18420"/>
    </cofactor>
</comment>
<comment type="pathway">
    <text evidence="1">Pyrimidine metabolism; UMP biosynthesis via de novo pathway; UMP from orotate: step 1/2.</text>
</comment>
<comment type="subunit">
    <text evidence="1">Homodimer.</text>
</comment>
<comment type="similarity">
    <text evidence="1">Belongs to the purine/pyrimidine phosphoribosyltransferase family. PyrE subfamily.</text>
</comment>
<protein>
    <recommendedName>
        <fullName evidence="1">Orotate phosphoribosyltransferase</fullName>
        <shortName evidence="1">OPRT</shortName>
        <shortName evidence="1">OPRTase</shortName>
        <ecNumber evidence="1">2.4.2.10</ecNumber>
    </recommendedName>
</protein>
<sequence length="210" mass="22875">MTLAKDIASHLLKIQAVYLKPEEPFTWASGIKSPIYTDNRVTLAYPETRTLIENGFVEAIKEAFPEVEVIAGTATAGIPHGAIIADKMDLPFAYIRSKPKDHGAGNQIEGRVAQGQKMVVVEDLISTGGSVLEAVAAAKREGADVLGVVAIFSYQLPKADKNFADAGVKLVTLSNYSDLIHLAQEEGYITPEGLYLLKRFKEDQENWQEG</sequence>
<name>PYRE_STRP2</name>
<reference key="1">
    <citation type="journal article" date="2007" name="J. Bacteriol.">
        <title>Genome sequence of Avery's virulent serotype 2 strain D39 of Streptococcus pneumoniae and comparison with that of unencapsulated laboratory strain R6.</title>
        <authorList>
            <person name="Lanie J.A."/>
            <person name="Ng W.-L."/>
            <person name="Kazmierczak K.M."/>
            <person name="Andrzejewski T.M."/>
            <person name="Davidsen T.M."/>
            <person name="Wayne K.J."/>
            <person name="Tettelin H."/>
            <person name="Glass J.I."/>
            <person name="Winkler M.E."/>
        </authorList>
    </citation>
    <scope>NUCLEOTIDE SEQUENCE [LARGE SCALE GENOMIC DNA]</scope>
    <source>
        <strain>D39 / NCTC 7466</strain>
    </source>
</reference>
<proteinExistence type="inferred from homology"/>
<accession>Q04LJ2</accession>
<organism>
    <name type="scientific">Streptococcus pneumoniae serotype 2 (strain D39 / NCTC 7466)</name>
    <dbReference type="NCBI Taxonomy" id="373153"/>
    <lineage>
        <taxon>Bacteria</taxon>
        <taxon>Bacillati</taxon>
        <taxon>Bacillota</taxon>
        <taxon>Bacilli</taxon>
        <taxon>Lactobacillales</taxon>
        <taxon>Streptococcaceae</taxon>
        <taxon>Streptococcus</taxon>
    </lineage>
</organism>
<gene>
    <name evidence="1" type="primary">pyrE</name>
    <name type="ordered locus">SPD_0609</name>
</gene>
<evidence type="ECO:0000255" key="1">
    <source>
        <dbReference type="HAMAP-Rule" id="MF_01208"/>
    </source>
</evidence>